<proteinExistence type="inferred from homology"/>
<sequence>MNRIDVHHHFIPPAYVKAFNSTPGDPSGWHLPKWTPESTLSLMASHSTRTAILSLTAPGTSIMSNSPVESANLARQINLYGFQLHQENPTRFGFFASLPHLTPETIPSAVEELAYALDTLQADGITLYTRYSGTGYLGHAAFAPLWEELNRRKAVVFIHPTNTASDAQNKPEMVNPKLPQPIIDYPHETCRTAVDLITSGTISKNPDVKIILSHGGGTLPILATRAANLLYDAGLTEITPETFLEQARSFYLDLALSGNVGNLELLVGKNGFAKPGHVLYGSDFPYAPVETINKYVGMMEEFFAQGGDKEEVARGAAAELFPRFRIEDNKEMIPQNRL</sequence>
<evidence type="ECO:0000250" key="1">
    <source>
        <dbReference type="UniProtKB" id="G3Y417"/>
    </source>
</evidence>
<evidence type="ECO:0000250" key="2">
    <source>
        <dbReference type="UniProtKB" id="Q8TDX5"/>
    </source>
</evidence>
<evidence type="ECO:0000269" key="3">
    <source>
    </source>
</evidence>
<evidence type="ECO:0000303" key="4">
    <source>
    </source>
</evidence>
<evidence type="ECO:0000305" key="5"/>
<feature type="chain" id="PRO_0000454085" description="Decarboxylase macB">
    <location>
        <begin position="1"/>
        <end position="338"/>
    </location>
</feature>
<feature type="binding site" evidence="2">
    <location>
        <position position="7"/>
    </location>
    <ligand>
        <name>Zn(2+)</name>
        <dbReference type="ChEBI" id="CHEBI:29105"/>
    </ligand>
</feature>
<feature type="binding site" evidence="2">
    <location>
        <position position="9"/>
    </location>
    <ligand>
        <name>Zn(2+)</name>
        <dbReference type="ChEBI" id="CHEBI:29105"/>
    </ligand>
</feature>
<feature type="binding site" evidence="2">
    <location>
        <position position="159"/>
    </location>
    <ligand>
        <name>Zn(2+)</name>
        <dbReference type="ChEBI" id="CHEBI:29105"/>
    </ligand>
</feature>
<feature type="binding site" evidence="2">
    <location>
        <position position="283"/>
    </location>
    <ligand>
        <name>Zn(2+)</name>
        <dbReference type="ChEBI" id="CHEBI:29105"/>
    </ligand>
</feature>
<keyword id="KW-0210">Decarboxylase</keyword>
<keyword id="KW-0456">Lyase</keyword>
<keyword id="KW-0479">Metal-binding</keyword>
<keyword id="KW-0862">Zinc</keyword>
<name>MACB_PENTR</name>
<gene>
    <name evidence="4" type="primary">macB</name>
</gene>
<protein>
    <recommendedName>
        <fullName evidence="4">Decarboxylase macB</fullName>
        <ecNumber evidence="1">4.1.1.52</ecNumber>
    </recommendedName>
    <alternativeName>
        <fullName evidence="4">Macrophorins biosynthesis cluster protein B</fullName>
    </alternativeName>
</protein>
<reference key="1">
    <citation type="journal article" date="2017" name="Org. Lett.">
        <title>Late-stage terpene cyclization by an integral membrane cyclase in the biosynthesis of isoprenoid epoxycyclohexenone natural products.</title>
        <authorList>
            <person name="Tang M.C."/>
            <person name="Cui X."/>
            <person name="He X."/>
            <person name="Ding Z."/>
            <person name="Zhu T."/>
            <person name="Tang Y."/>
            <person name="Li D."/>
        </authorList>
    </citation>
    <scope>NUCLEOTIDE SEQUENCE [GENOMIC DNA]</scope>
    <scope>FUNCTION</scope>
    <scope>PATHWAY</scope>
    <source>
        <strain>LM2</strain>
    </source>
</reference>
<dbReference type="EC" id="4.1.1.52" evidence="1"/>
<dbReference type="EMBL" id="MF989997">
    <property type="protein sequence ID" value="AVK70098.1"/>
    <property type="molecule type" value="Genomic_DNA"/>
</dbReference>
<dbReference type="EMBL" id="MH388470">
    <property type="protein sequence ID" value="QBC75450.1"/>
    <property type="molecule type" value="Genomic_DNA"/>
</dbReference>
<dbReference type="SMR" id="A0A2P1DP90"/>
<dbReference type="UniPathway" id="UPA00213"/>
<dbReference type="GO" id="GO:0005829">
    <property type="term" value="C:cytosol"/>
    <property type="evidence" value="ECO:0007669"/>
    <property type="project" value="TreeGrafter"/>
</dbReference>
<dbReference type="GO" id="GO:0016831">
    <property type="term" value="F:carboxy-lyase activity"/>
    <property type="evidence" value="ECO:0007669"/>
    <property type="project" value="UniProtKB-KW"/>
</dbReference>
<dbReference type="GO" id="GO:0016787">
    <property type="term" value="F:hydrolase activity"/>
    <property type="evidence" value="ECO:0007669"/>
    <property type="project" value="InterPro"/>
</dbReference>
<dbReference type="GO" id="GO:0046872">
    <property type="term" value="F:metal ion binding"/>
    <property type="evidence" value="ECO:0007669"/>
    <property type="project" value="UniProtKB-KW"/>
</dbReference>
<dbReference type="GO" id="GO:0019748">
    <property type="term" value="P:secondary metabolic process"/>
    <property type="evidence" value="ECO:0007669"/>
    <property type="project" value="TreeGrafter"/>
</dbReference>
<dbReference type="GO" id="GO:0016114">
    <property type="term" value="P:terpenoid biosynthetic process"/>
    <property type="evidence" value="ECO:0007669"/>
    <property type="project" value="UniProtKB-UniPathway"/>
</dbReference>
<dbReference type="Gene3D" id="3.20.20.140">
    <property type="entry name" value="Metal-dependent hydrolases"/>
    <property type="match status" value="1"/>
</dbReference>
<dbReference type="InterPro" id="IPR032465">
    <property type="entry name" value="ACMSD"/>
</dbReference>
<dbReference type="InterPro" id="IPR006680">
    <property type="entry name" value="Amidohydro-rel"/>
</dbReference>
<dbReference type="InterPro" id="IPR032466">
    <property type="entry name" value="Metal_Hydrolase"/>
</dbReference>
<dbReference type="PANTHER" id="PTHR21240">
    <property type="entry name" value="2-AMINO-3-CARBOXYLMUCONATE-6-SEMIALDEHYDE DECARBOXYLASE"/>
    <property type="match status" value="1"/>
</dbReference>
<dbReference type="PANTHER" id="PTHR21240:SF29">
    <property type="entry name" value="AMIDOHYDROLASE-RELATED DOMAIN-CONTAINING PROTEIN"/>
    <property type="match status" value="1"/>
</dbReference>
<dbReference type="Pfam" id="PF04909">
    <property type="entry name" value="Amidohydro_2"/>
    <property type="match status" value="1"/>
</dbReference>
<dbReference type="SUPFAM" id="SSF51556">
    <property type="entry name" value="Metallo-dependent hydrolases"/>
    <property type="match status" value="1"/>
</dbReference>
<accession>A0A2P1DP90</accession>
<organism>
    <name type="scientific">Penicillium terrestre</name>
    <dbReference type="NCBI Taxonomy" id="374132"/>
    <lineage>
        <taxon>Eukaryota</taxon>
        <taxon>Fungi</taxon>
        <taxon>Dikarya</taxon>
        <taxon>Ascomycota</taxon>
        <taxon>Pezizomycotina</taxon>
        <taxon>Eurotiomycetes</taxon>
        <taxon>Eurotiomycetidae</taxon>
        <taxon>Eurotiales</taxon>
        <taxon>Aspergillaceae</taxon>
        <taxon>Penicillium</taxon>
    </lineage>
</organism>
<comment type="function">
    <text evidence="1 3">Decarboxylase; part of the gene cluster that mediates the biosynthesis of macrophorins, isoprenoid epoxycyclohexenones containing cyclized drimane moieties (PubMed:28926261). The first step of the pathway is the synthesis of 6-methylsalicylic acid (6-MSA) by the polyketide synthase macA (PubMed:28926261). 6-MSA is then converted to m-cresol by the decarboxylase macB (By similarity). The cytochrome P450 monooxygenase macC then catalyzes the oxidation of m-cresol to toluquinol (By similarity). Epoxidation of toluquinol is then performed by the short chain dehydrogenase macD, with the help of macE, and a further prenylation by macG leads to 7-deacetoxyyanuthone A (By similarity). The next step is the hydroxylation of C-22 of 7-deacetoxyyanuthone A by the cytochrome P450 monooxygenase macH to yield 22-deacetylyanuthone A (By similarity). O-Mevalon transferase macI then attaches mevalon to the hydroxyl group of 22-deacetylyanuthone A to produce yanuthone E (By similarity). The terpene cyclase macJ catalyzes the cyclization of 22-deacetylyanuthone A to macrophorin A (PubMed:28926261). MacJ is also able to catalyze cyclization of yanuthone E and 7-deacetoxyyanuthone A to their corresponding macrophorins (PubMed:28926261). The macJ products can be further modified by macH and macJ, as well as by the FAD-dependent monooxygenase macF, to produce additional macrophorins, including 4'-oxomacrophorin A, 4'-oxomacrophorin D and 4'-oxomacrophorin E (PubMed:28926261).</text>
</comment>
<comment type="catalytic activity">
    <reaction evidence="1">
        <text>6-methylsalicylate + H(+) = 3-methylphenol + CO2</text>
        <dbReference type="Rhea" id="RHEA:23112"/>
        <dbReference type="ChEBI" id="CHEBI:15378"/>
        <dbReference type="ChEBI" id="CHEBI:16526"/>
        <dbReference type="ChEBI" id="CHEBI:17231"/>
        <dbReference type="ChEBI" id="CHEBI:36658"/>
        <dbReference type="EC" id="4.1.1.52"/>
    </reaction>
    <physiologicalReaction direction="left-to-right" evidence="1">
        <dbReference type="Rhea" id="RHEA:23113"/>
    </physiologicalReaction>
</comment>
<comment type="pathway">
    <text evidence="3">Secondary metabolite biosynthesis; terpenoid biosynthesis.</text>
</comment>
<comment type="miscellaneous">
    <text evidence="3">The macrophorins cluster contains a single gene insertion (encoding for the terpene cyclase macJ) compared with the yanuthone cluster that produces the linear compound yanuthone.</text>
</comment>
<comment type="similarity">
    <text evidence="5">Belongs to the metallo-dependent hydrolases superfamily. ACMSD family.</text>
</comment>